<protein>
    <recommendedName>
        <fullName evidence="1">Ribosome biogenesis protein WDR12 homolog</fullName>
    </recommendedName>
    <alternativeName>
        <fullName evidence="1">WD repeat-containing protein 12 homolog</fullName>
    </alternativeName>
</protein>
<dbReference type="EMBL" id="AAFI02000034">
    <property type="protein sequence ID" value="EAL67508.1"/>
    <property type="molecule type" value="Genomic_DNA"/>
</dbReference>
<dbReference type="RefSeq" id="XP_641483.1">
    <property type="nucleotide sequence ID" value="XM_636391.1"/>
</dbReference>
<dbReference type="SMR" id="Q54W52"/>
<dbReference type="FunCoup" id="Q54W52">
    <property type="interactions" value="672"/>
</dbReference>
<dbReference type="STRING" id="44689.Q54W52"/>
<dbReference type="PaxDb" id="44689-DDB0233985"/>
<dbReference type="EnsemblProtists" id="EAL67508">
    <property type="protein sequence ID" value="EAL67508"/>
    <property type="gene ID" value="DDB_G0279903"/>
</dbReference>
<dbReference type="GeneID" id="8622282"/>
<dbReference type="KEGG" id="ddi:DDB_G0279903"/>
<dbReference type="dictyBase" id="DDB_G0279903">
    <property type="gene designation" value="wdr12"/>
</dbReference>
<dbReference type="VEuPathDB" id="AmoebaDB:DDB_G0279903"/>
<dbReference type="eggNOG" id="KOG0313">
    <property type="taxonomic scope" value="Eukaryota"/>
</dbReference>
<dbReference type="HOGENOM" id="CLU_000288_57_0_1"/>
<dbReference type="InParanoid" id="Q54W52"/>
<dbReference type="OMA" id="DHKYVEF"/>
<dbReference type="PhylomeDB" id="Q54W52"/>
<dbReference type="Reactome" id="R-DDI-6791226">
    <property type="pathway name" value="Major pathway of rRNA processing in the nucleolus and cytosol"/>
</dbReference>
<dbReference type="PRO" id="PR:Q54W52"/>
<dbReference type="Proteomes" id="UP000002195">
    <property type="component" value="Chromosome 3"/>
</dbReference>
<dbReference type="GO" id="GO:0005730">
    <property type="term" value="C:nucleolus"/>
    <property type="evidence" value="ECO:0000250"/>
    <property type="project" value="dictyBase"/>
</dbReference>
<dbReference type="GO" id="GO:0005654">
    <property type="term" value="C:nucleoplasm"/>
    <property type="evidence" value="ECO:0007669"/>
    <property type="project" value="UniProtKB-SubCell"/>
</dbReference>
<dbReference type="GO" id="GO:0030687">
    <property type="term" value="C:preribosome, large subunit precursor"/>
    <property type="evidence" value="ECO:0007669"/>
    <property type="project" value="UniProtKB-UniRule"/>
</dbReference>
<dbReference type="GO" id="GO:0043021">
    <property type="term" value="F:ribonucleoprotein complex binding"/>
    <property type="evidence" value="ECO:0007669"/>
    <property type="project" value="UniProtKB-UniRule"/>
</dbReference>
<dbReference type="GO" id="GO:0000466">
    <property type="term" value="P:maturation of 5.8S rRNA from tricistronic rRNA transcript (SSU-rRNA, 5.8S rRNA, LSU-rRNA)"/>
    <property type="evidence" value="ECO:0007669"/>
    <property type="project" value="UniProtKB-UniRule"/>
</dbReference>
<dbReference type="GO" id="GO:0000463">
    <property type="term" value="P:maturation of LSU-rRNA from tricistronic rRNA transcript (SSU-rRNA, 5.8S rRNA, LSU-rRNA)"/>
    <property type="evidence" value="ECO:0007669"/>
    <property type="project" value="UniProtKB-UniRule"/>
</dbReference>
<dbReference type="GO" id="GO:0046689">
    <property type="term" value="P:response to mercury ion"/>
    <property type="evidence" value="ECO:0000314"/>
    <property type="project" value="dictyBase"/>
</dbReference>
<dbReference type="GO" id="GO:0042273">
    <property type="term" value="P:ribosomal large subunit biogenesis"/>
    <property type="evidence" value="ECO:0000250"/>
    <property type="project" value="dictyBase"/>
</dbReference>
<dbReference type="FunFam" id="2.130.10.10:FF:002606">
    <property type="entry name" value="Ribosome biogenesis protein WDR12 homolog"/>
    <property type="match status" value="1"/>
</dbReference>
<dbReference type="Gene3D" id="2.130.10.10">
    <property type="entry name" value="YVTN repeat-like/Quinoprotein amine dehydrogenase"/>
    <property type="match status" value="1"/>
</dbReference>
<dbReference type="HAMAP" id="MF_03029">
    <property type="entry name" value="WDR12"/>
    <property type="match status" value="1"/>
</dbReference>
<dbReference type="InterPro" id="IPR020472">
    <property type="entry name" value="G-protein_beta_WD-40_rep"/>
</dbReference>
<dbReference type="InterPro" id="IPR012972">
    <property type="entry name" value="NLE"/>
</dbReference>
<dbReference type="InterPro" id="IPR015943">
    <property type="entry name" value="WD40/YVTN_repeat-like_dom_sf"/>
</dbReference>
<dbReference type="InterPro" id="IPR019775">
    <property type="entry name" value="WD40_repeat_CS"/>
</dbReference>
<dbReference type="InterPro" id="IPR036322">
    <property type="entry name" value="WD40_repeat_dom_sf"/>
</dbReference>
<dbReference type="InterPro" id="IPR001680">
    <property type="entry name" value="WD40_rpt"/>
</dbReference>
<dbReference type="InterPro" id="IPR028599">
    <property type="entry name" value="WDR12/Ytm1"/>
</dbReference>
<dbReference type="PANTHER" id="PTHR19855:SF11">
    <property type="entry name" value="RIBOSOME BIOGENESIS PROTEIN WDR12"/>
    <property type="match status" value="1"/>
</dbReference>
<dbReference type="PANTHER" id="PTHR19855">
    <property type="entry name" value="WD40 REPEAT PROTEIN 12, 37"/>
    <property type="match status" value="1"/>
</dbReference>
<dbReference type="Pfam" id="PF08154">
    <property type="entry name" value="NLE"/>
    <property type="match status" value="1"/>
</dbReference>
<dbReference type="Pfam" id="PF00400">
    <property type="entry name" value="WD40"/>
    <property type="match status" value="6"/>
</dbReference>
<dbReference type="PRINTS" id="PR00320">
    <property type="entry name" value="GPROTEINBRPT"/>
</dbReference>
<dbReference type="SMART" id="SM00320">
    <property type="entry name" value="WD40"/>
    <property type="match status" value="7"/>
</dbReference>
<dbReference type="SUPFAM" id="SSF50978">
    <property type="entry name" value="WD40 repeat-like"/>
    <property type="match status" value="1"/>
</dbReference>
<dbReference type="PROSITE" id="PS00678">
    <property type="entry name" value="WD_REPEATS_1"/>
    <property type="match status" value="1"/>
</dbReference>
<dbReference type="PROSITE" id="PS50082">
    <property type="entry name" value="WD_REPEATS_2"/>
    <property type="match status" value="5"/>
</dbReference>
<dbReference type="PROSITE" id="PS50294">
    <property type="entry name" value="WD_REPEATS_REGION"/>
    <property type="match status" value="1"/>
</dbReference>
<proteinExistence type="evidence at transcript level"/>
<comment type="function">
    <text evidence="1">Required for maturation of ribosomal RNAs and formation of the large ribosomal subunit.</text>
</comment>
<comment type="subcellular location">
    <subcellularLocation>
        <location evidence="1">Nucleus</location>
        <location evidence="1">Nucleolus</location>
    </subcellularLocation>
    <subcellularLocation>
        <location evidence="1">Nucleus</location>
        <location evidence="1">Nucleoplasm</location>
    </subcellularLocation>
</comment>
<comment type="induction">
    <text evidence="3">Up-regulated by phagocytic stimuli.</text>
</comment>
<comment type="similarity">
    <text evidence="1">Belongs to the WD repeat WDR12/YTM1 family.</text>
</comment>
<gene>
    <name type="primary">wdr12</name>
    <name type="ORF">DDB_G0279903</name>
</gene>
<sequence>MESENKNNNKKVKEESKVKVKFITNDANIRVTDTPIAVPVRLGRLGLSEVIHHLREEENETSKPFDFLINGKFIRTTLDKHIKNANLSEEQIITIEYLEAITEPKREKECQHDDWVSCVDGSNFGLVVSGSYDLGVRVWGYDGELISTGTGHLAGVKSVCWISDKNADNLSFVSASMDKTLRVWNFNKSQSEIKALACLKEHTGTIESVYVSPDSSRIVSASMDSTIKLWSIKDIPNQHATTSSSIEKSNSKKRRLANNTNNETAAVDQQSEIIHNITESLASVTVPNSQGVTVVNWTTQFQMLSGSMDSKIRLWDVSTLVANDTIPTPAPLTDLDYSMESGLIVTAHKDRIVRIWDPRSSDETKSQTQSLISHKTWVTSVNWNPSSKYHCCSTSHDGTVKYWDIRTKIPLYTIDTLEKSKDKVLSSSFISNKNKNINDYSIVSGGTDSKLRIHYNDKQEQQQ</sequence>
<organism>
    <name type="scientific">Dictyostelium discoideum</name>
    <name type="common">Social amoeba</name>
    <dbReference type="NCBI Taxonomy" id="44689"/>
    <lineage>
        <taxon>Eukaryota</taxon>
        <taxon>Amoebozoa</taxon>
        <taxon>Evosea</taxon>
        <taxon>Eumycetozoa</taxon>
        <taxon>Dictyostelia</taxon>
        <taxon>Dictyosteliales</taxon>
        <taxon>Dictyosteliaceae</taxon>
        <taxon>Dictyostelium</taxon>
    </lineage>
</organism>
<reference key="1">
    <citation type="journal article" date="2005" name="Nature">
        <title>The genome of the social amoeba Dictyostelium discoideum.</title>
        <authorList>
            <person name="Eichinger L."/>
            <person name="Pachebat J.A."/>
            <person name="Gloeckner G."/>
            <person name="Rajandream M.A."/>
            <person name="Sucgang R."/>
            <person name="Berriman M."/>
            <person name="Song J."/>
            <person name="Olsen R."/>
            <person name="Szafranski K."/>
            <person name="Xu Q."/>
            <person name="Tunggal B."/>
            <person name="Kummerfeld S."/>
            <person name="Madera M."/>
            <person name="Konfortov B.A."/>
            <person name="Rivero F."/>
            <person name="Bankier A.T."/>
            <person name="Lehmann R."/>
            <person name="Hamlin N."/>
            <person name="Davies R."/>
            <person name="Gaudet P."/>
            <person name="Fey P."/>
            <person name="Pilcher K."/>
            <person name="Chen G."/>
            <person name="Saunders D."/>
            <person name="Sodergren E.J."/>
            <person name="Davis P."/>
            <person name="Kerhornou A."/>
            <person name="Nie X."/>
            <person name="Hall N."/>
            <person name="Anjard C."/>
            <person name="Hemphill L."/>
            <person name="Bason N."/>
            <person name="Farbrother P."/>
            <person name="Desany B."/>
            <person name="Just E."/>
            <person name="Morio T."/>
            <person name="Rost R."/>
            <person name="Churcher C.M."/>
            <person name="Cooper J."/>
            <person name="Haydock S."/>
            <person name="van Driessche N."/>
            <person name="Cronin A."/>
            <person name="Goodhead I."/>
            <person name="Muzny D.M."/>
            <person name="Mourier T."/>
            <person name="Pain A."/>
            <person name="Lu M."/>
            <person name="Harper D."/>
            <person name="Lindsay R."/>
            <person name="Hauser H."/>
            <person name="James K.D."/>
            <person name="Quiles M."/>
            <person name="Madan Babu M."/>
            <person name="Saito T."/>
            <person name="Buchrieser C."/>
            <person name="Wardroper A."/>
            <person name="Felder M."/>
            <person name="Thangavelu M."/>
            <person name="Johnson D."/>
            <person name="Knights A."/>
            <person name="Loulseged H."/>
            <person name="Mungall K.L."/>
            <person name="Oliver K."/>
            <person name="Price C."/>
            <person name="Quail M.A."/>
            <person name="Urushihara H."/>
            <person name="Hernandez J."/>
            <person name="Rabbinowitsch E."/>
            <person name="Steffen D."/>
            <person name="Sanders M."/>
            <person name="Ma J."/>
            <person name="Kohara Y."/>
            <person name="Sharp S."/>
            <person name="Simmonds M.N."/>
            <person name="Spiegler S."/>
            <person name="Tivey A."/>
            <person name="Sugano S."/>
            <person name="White B."/>
            <person name="Walker D."/>
            <person name="Woodward J.R."/>
            <person name="Winckler T."/>
            <person name="Tanaka Y."/>
            <person name="Shaulsky G."/>
            <person name="Schleicher M."/>
            <person name="Weinstock G.M."/>
            <person name="Rosenthal A."/>
            <person name="Cox E.C."/>
            <person name="Chisholm R.L."/>
            <person name="Gibbs R.A."/>
            <person name="Loomis W.F."/>
            <person name="Platzer M."/>
            <person name="Kay R.R."/>
            <person name="Williams J.G."/>
            <person name="Dear P.H."/>
            <person name="Noegel A.A."/>
            <person name="Barrell B.G."/>
            <person name="Kuspa A."/>
        </authorList>
    </citation>
    <scope>NUCLEOTIDE SEQUENCE [LARGE SCALE GENOMIC DNA]</scope>
    <source>
        <strain>AX4</strain>
    </source>
</reference>
<reference key="2">
    <citation type="journal article" date="2008" name="BMC Genomics">
        <title>Genome-wide transcriptional changes induced by phagocytosis or growth on bacteria in Dictyostelium.</title>
        <authorList>
            <person name="Sillo A."/>
            <person name="Bloomfield G."/>
            <person name="Balest A."/>
            <person name="Balbo A."/>
            <person name="Pergolizzi B."/>
            <person name="Peracino B."/>
            <person name="Skelton J."/>
            <person name="Ivens A."/>
            <person name="Bozzaro S."/>
        </authorList>
    </citation>
    <scope>INDUCTION [LARGE SCALE ANALYSIS]</scope>
</reference>
<evidence type="ECO:0000255" key="1">
    <source>
        <dbReference type="HAMAP-Rule" id="MF_03029"/>
    </source>
</evidence>
<evidence type="ECO:0000256" key="2">
    <source>
        <dbReference type="SAM" id="MobiDB-lite"/>
    </source>
</evidence>
<evidence type="ECO:0000269" key="3">
    <source>
    </source>
</evidence>
<keyword id="KW-0539">Nucleus</keyword>
<keyword id="KW-1185">Reference proteome</keyword>
<keyword id="KW-0677">Repeat</keyword>
<keyword id="KW-0690">Ribosome biogenesis</keyword>
<keyword id="KW-0698">rRNA processing</keyword>
<keyword id="KW-0853">WD repeat</keyword>
<feature type="chain" id="PRO_0000354083" description="Ribosome biogenesis protein WDR12 homolog">
    <location>
        <begin position="1"/>
        <end position="463"/>
    </location>
</feature>
<feature type="repeat" description="WD 1">
    <location>
        <begin position="111"/>
        <end position="149"/>
    </location>
</feature>
<feature type="repeat" description="WD 2">
    <location>
        <begin position="151"/>
        <end position="194"/>
    </location>
</feature>
<feature type="repeat" description="WD 3">
    <location>
        <begin position="201"/>
        <end position="240"/>
    </location>
</feature>
<feature type="repeat" description="WD 4">
    <location>
        <begin position="287"/>
        <end position="325"/>
    </location>
</feature>
<feature type="repeat" description="WD 5">
    <location>
        <begin position="327"/>
        <end position="366"/>
    </location>
</feature>
<feature type="repeat" description="WD 6">
    <location>
        <begin position="373"/>
        <end position="413"/>
    </location>
</feature>
<feature type="repeat" description="WD 7">
    <location>
        <begin position="419"/>
        <end position="463"/>
    </location>
</feature>
<feature type="region of interest" description="Ubiquitin-like (UBL) domain" evidence="1">
    <location>
        <begin position="16"/>
        <end position="99"/>
    </location>
</feature>
<feature type="region of interest" description="Disordered" evidence="2">
    <location>
        <begin position="241"/>
        <end position="262"/>
    </location>
</feature>
<accession>Q54W52</accession>
<name>WDR12_DICDI</name>